<name>ASSY_PHOPR</name>
<organism>
    <name type="scientific">Photobacterium profundum (strain SS9)</name>
    <dbReference type="NCBI Taxonomy" id="298386"/>
    <lineage>
        <taxon>Bacteria</taxon>
        <taxon>Pseudomonadati</taxon>
        <taxon>Pseudomonadota</taxon>
        <taxon>Gammaproteobacteria</taxon>
        <taxon>Vibrionales</taxon>
        <taxon>Vibrionaceae</taxon>
        <taxon>Photobacterium</taxon>
    </lineage>
</organism>
<sequence>MSKVTKVVLAYSGGLDTSAIIPWLKENYDCEVVAFVADVGQGAAELEGIEEKAIASGASSCYIADLKEEMVADYIYPSLKTGAIYEGKYLLGTSMARPIIAKAQVECALAVGADAVCHGCTGKGNDQVRFEGAYAALAPQLTVIAPWREWDLRSREALLDYLAERDIPCTASLEKIYSRDANAWHISTEGGVLENTWNQSNELCWVWTKDPENAPEKAETVSILVEKGEVVAVDGEAMSPFNALTYLNEKGAEHGVGRIDIVENRLVGIKSRGCYETPGGTIMNEALRAVEQLVLDKESYEFRETVGLKASHLIYDGRWFTPLCKSILAAADELAQDVSGEVVVKLYKGQATVIQKRSMNSLYSEEFATFGEDDVYDHSHAGGFIRLYSLASRIRALNTQKKQK</sequence>
<proteinExistence type="inferred from homology"/>
<reference key="1">
    <citation type="journal article" date="2005" name="Science">
        <title>Life at depth: Photobacterium profundum genome sequence and expression analysis.</title>
        <authorList>
            <person name="Vezzi A."/>
            <person name="Campanaro S."/>
            <person name="D'Angelo M."/>
            <person name="Simonato F."/>
            <person name="Vitulo N."/>
            <person name="Lauro F.M."/>
            <person name="Cestaro A."/>
            <person name="Malacrida G."/>
            <person name="Simionati B."/>
            <person name="Cannata N."/>
            <person name="Romualdi C."/>
            <person name="Bartlett D.H."/>
            <person name="Valle G."/>
        </authorList>
    </citation>
    <scope>NUCLEOTIDE SEQUENCE [LARGE SCALE GENOMIC DNA]</scope>
    <source>
        <strain>ATCC BAA-1253 / SS9</strain>
    </source>
</reference>
<evidence type="ECO:0000255" key="1">
    <source>
        <dbReference type="HAMAP-Rule" id="MF_00005"/>
    </source>
</evidence>
<comment type="catalytic activity">
    <reaction evidence="1">
        <text>L-citrulline + L-aspartate + ATP = 2-(N(omega)-L-arginino)succinate + AMP + diphosphate + H(+)</text>
        <dbReference type="Rhea" id="RHEA:10932"/>
        <dbReference type="ChEBI" id="CHEBI:15378"/>
        <dbReference type="ChEBI" id="CHEBI:29991"/>
        <dbReference type="ChEBI" id="CHEBI:30616"/>
        <dbReference type="ChEBI" id="CHEBI:33019"/>
        <dbReference type="ChEBI" id="CHEBI:57472"/>
        <dbReference type="ChEBI" id="CHEBI:57743"/>
        <dbReference type="ChEBI" id="CHEBI:456215"/>
        <dbReference type="EC" id="6.3.4.5"/>
    </reaction>
</comment>
<comment type="pathway">
    <text evidence="1">Amino-acid biosynthesis; L-arginine biosynthesis; L-arginine from L-ornithine and carbamoyl phosphate: step 2/3.</text>
</comment>
<comment type="subunit">
    <text evidence="1">Homotetramer.</text>
</comment>
<comment type="subcellular location">
    <subcellularLocation>
        <location evidence="1">Cytoplasm</location>
    </subcellularLocation>
</comment>
<comment type="similarity">
    <text evidence="1">Belongs to the argininosuccinate synthase family. Type 1 subfamily.</text>
</comment>
<protein>
    <recommendedName>
        <fullName evidence="1">Argininosuccinate synthase</fullName>
        <ecNumber evidence="1">6.3.4.5</ecNumber>
    </recommendedName>
    <alternativeName>
        <fullName evidence="1">Citrulline--aspartate ligase</fullName>
    </alternativeName>
</protein>
<accession>Q6LVG8</accession>
<feature type="chain" id="PRO_0000148622" description="Argininosuccinate synthase">
    <location>
        <begin position="1"/>
        <end position="404"/>
    </location>
</feature>
<feature type="binding site" evidence="1">
    <location>
        <begin position="10"/>
        <end position="18"/>
    </location>
    <ligand>
        <name>ATP</name>
        <dbReference type="ChEBI" id="CHEBI:30616"/>
    </ligand>
</feature>
<feature type="binding site" evidence="1">
    <location>
        <position position="37"/>
    </location>
    <ligand>
        <name>ATP</name>
        <dbReference type="ChEBI" id="CHEBI:30616"/>
    </ligand>
</feature>
<feature type="binding site" evidence="1">
    <location>
        <position position="89"/>
    </location>
    <ligand>
        <name>L-citrulline</name>
        <dbReference type="ChEBI" id="CHEBI:57743"/>
    </ligand>
</feature>
<feature type="binding site" evidence="1">
    <location>
        <position position="94"/>
    </location>
    <ligand>
        <name>L-citrulline</name>
        <dbReference type="ChEBI" id="CHEBI:57743"/>
    </ligand>
</feature>
<feature type="binding site" evidence="1">
    <location>
        <position position="119"/>
    </location>
    <ligand>
        <name>ATP</name>
        <dbReference type="ChEBI" id="CHEBI:30616"/>
    </ligand>
</feature>
<feature type="binding site" evidence="1">
    <location>
        <position position="121"/>
    </location>
    <ligand>
        <name>L-aspartate</name>
        <dbReference type="ChEBI" id="CHEBI:29991"/>
    </ligand>
</feature>
<feature type="binding site" evidence="1">
    <location>
        <position position="125"/>
    </location>
    <ligand>
        <name>L-aspartate</name>
        <dbReference type="ChEBI" id="CHEBI:29991"/>
    </ligand>
</feature>
<feature type="binding site" evidence="1">
    <location>
        <position position="125"/>
    </location>
    <ligand>
        <name>L-citrulline</name>
        <dbReference type="ChEBI" id="CHEBI:57743"/>
    </ligand>
</feature>
<feature type="binding site" evidence="1">
    <location>
        <position position="126"/>
    </location>
    <ligand>
        <name>L-aspartate</name>
        <dbReference type="ChEBI" id="CHEBI:29991"/>
    </ligand>
</feature>
<feature type="binding site" evidence="1">
    <location>
        <position position="129"/>
    </location>
    <ligand>
        <name>L-citrulline</name>
        <dbReference type="ChEBI" id="CHEBI:57743"/>
    </ligand>
</feature>
<feature type="binding site" evidence="1">
    <location>
        <position position="178"/>
    </location>
    <ligand>
        <name>L-citrulline</name>
        <dbReference type="ChEBI" id="CHEBI:57743"/>
    </ligand>
</feature>
<feature type="binding site" evidence="1">
    <location>
        <position position="187"/>
    </location>
    <ligand>
        <name>L-citrulline</name>
        <dbReference type="ChEBI" id="CHEBI:57743"/>
    </ligand>
</feature>
<feature type="binding site" evidence="1">
    <location>
        <position position="263"/>
    </location>
    <ligand>
        <name>L-citrulline</name>
        <dbReference type="ChEBI" id="CHEBI:57743"/>
    </ligand>
</feature>
<feature type="binding site" evidence="1">
    <location>
        <position position="275"/>
    </location>
    <ligand>
        <name>L-citrulline</name>
        <dbReference type="ChEBI" id="CHEBI:57743"/>
    </ligand>
</feature>
<keyword id="KW-0028">Amino-acid biosynthesis</keyword>
<keyword id="KW-0055">Arginine biosynthesis</keyword>
<keyword id="KW-0067">ATP-binding</keyword>
<keyword id="KW-0963">Cytoplasm</keyword>
<keyword id="KW-0436">Ligase</keyword>
<keyword id="KW-0547">Nucleotide-binding</keyword>
<keyword id="KW-1185">Reference proteome</keyword>
<gene>
    <name evidence="1" type="primary">argG</name>
    <name type="ordered locus">PBPRA0268</name>
</gene>
<dbReference type="EC" id="6.3.4.5" evidence="1"/>
<dbReference type="EMBL" id="CR378663">
    <property type="protein sequence ID" value="CAG18707.1"/>
    <property type="molecule type" value="Genomic_DNA"/>
</dbReference>
<dbReference type="RefSeq" id="WP_011217081.1">
    <property type="nucleotide sequence ID" value="NC_006370.1"/>
</dbReference>
<dbReference type="SMR" id="Q6LVG8"/>
<dbReference type="STRING" id="298386.PBPRA0268"/>
<dbReference type="KEGG" id="ppr:PBPRA0268"/>
<dbReference type="eggNOG" id="COG0137">
    <property type="taxonomic scope" value="Bacteria"/>
</dbReference>
<dbReference type="HOGENOM" id="CLU_032784_4_2_6"/>
<dbReference type="UniPathway" id="UPA00068">
    <property type="reaction ID" value="UER00113"/>
</dbReference>
<dbReference type="Proteomes" id="UP000000593">
    <property type="component" value="Chromosome 1"/>
</dbReference>
<dbReference type="GO" id="GO:0005737">
    <property type="term" value="C:cytoplasm"/>
    <property type="evidence" value="ECO:0007669"/>
    <property type="project" value="UniProtKB-SubCell"/>
</dbReference>
<dbReference type="GO" id="GO:0004055">
    <property type="term" value="F:argininosuccinate synthase activity"/>
    <property type="evidence" value="ECO:0007669"/>
    <property type="project" value="UniProtKB-UniRule"/>
</dbReference>
<dbReference type="GO" id="GO:0005524">
    <property type="term" value="F:ATP binding"/>
    <property type="evidence" value="ECO:0007669"/>
    <property type="project" value="UniProtKB-UniRule"/>
</dbReference>
<dbReference type="GO" id="GO:0000053">
    <property type="term" value="P:argininosuccinate metabolic process"/>
    <property type="evidence" value="ECO:0007669"/>
    <property type="project" value="TreeGrafter"/>
</dbReference>
<dbReference type="GO" id="GO:0006526">
    <property type="term" value="P:L-arginine biosynthetic process"/>
    <property type="evidence" value="ECO:0007669"/>
    <property type="project" value="UniProtKB-UniRule"/>
</dbReference>
<dbReference type="GO" id="GO:0000050">
    <property type="term" value="P:urea cycle"/>
    <property type="evidence" value="ECO:0007669"/>
    <property type="project" value="TreeGrafter"/>
</dbReference>
<dbReference type="CDD" id="cd01999">
    <property type="entry name" value="ASS"/>
    <property type="match status" value="1"/>
</dbReference>
<dbReference type="FunFam" id="3.40.50.620:FF:000019">
    <property type="entry name" value="Argininosuccinate synthase"/>
    <property type="match status" value="1"/>
</dbReference>
<dbReference type="FunFam" id="3.90.1260.10:FF:000007">
    <property type="entry name" value="Argininosuccinate synthase"/>
    <property type="match status" value="1"/>
</dbReference>
<dbReference type="Gene3D" id="3.90.1260.10">
    <property type="entry name" value="Argininosuccinate synthetase, chain A, domain 2"/>
    <property type="match status" value="1"/>
</dbReference>
<dbReference type="Gene3D" id="3.40.50.620">
    <property type="entry name" value="HUPs"/>
    <property type="match status" value="1"/>
</dbReference>
<dbReference type="Gene3D" id="1.20.5.470">
    <property type="entry name" value="Single helix bin"/>
    <property type="match status" value="1"/>
</dbReference>
<dbReference type="HAMAP" id="MF_00005">
    <property type="entry name" value="Arg_succ_synth_type1"/>
    <property type="match status" value="1"/>
</dbReference>
<dbReference type="InterPro" id="IPR048268">
    <property type="entry name" value="Arginosuc_syn_C"/>
</dbReference>
<dbReference type="InterPro" id="IPR048267">
    <property type="entry name" value="Arginosuc_syn_N"/>
</dbReference>
<dbReference type="InterPro" id="IPR001518">
    <property type="entry name" value="Arginosuc_synth"/>
</dbReference>
<dbReference type="InterPro" id="IPR018223">
    <property type="entry name" value="Arginosuc_synth_CS"/>
</dbReference>
<dbReference type="InterPro" id="IPR023434">
    <property type="entry name" value="Arginosuc_synth_type_1_subfam"/>
</dbReference>
<dbReference type="InterPro" id="IPR024074">
    <property type="entry name" value="AS_cat/multimer_dom_body"/>
</dbReference>
<dbReference type="InterPro" id="IPR014729">
    <property type="entry name" value="Rossmann-like_a/b/a_fold"/>
</dbReference>
<dbReference type="NCBIfam" id="TIGR00032">
    <property type="entry name" value="argG"/>
    <property type="match status" value="1"/>
</dbReference>
<dbReference type="NCBIfam" id="NF001770">
    <property type="entry name" value="PRK00509.1"/>
    <property type="match status" value="1"/>
</dbReference>
<dbReference type="PANTHER" id="PTHR11587">
    <property type="entry name" value="ARGININOSUCCINATE SYNTHASE"/>
    <property type="match status" value="1"/>
</dbReference>
<dbReference type="PANTHER" id="PTHR11587:SF2">
    <property type="entry name" value="ARGININOSUCCINATE SYNTHASE"/>
    <property type="match status" value="1"/>
</dbReference>
<dbReference type="Pfam" id="PF20979">
    <property type="entry name" value="Arginosuc_syn_C"/>
    <property type="match status" value="1"/>
</dbReference>
<dbReference type="Pfam" id="PF00764">
    <property type="entry name" value="Arginosuc_synth"/>
    <property type="match status" value="1"/>
</dbReference>
<dbReference type="SUPFAM" id="SSF52402">
    <property type="entry name" value="Adenine nucleotide alpha hydrolases-like"/>
    <property type="match status" value="1"/>
</dbReference>
<dbReference type="SUPFAM" id="SSF69864">
    <property type="entry name" value="Argininosuccinate synthetase, C-terminal domain"/>
    <property type="match status" value="1"/>
</dbReference>
<dbReference type="PROSITE" id="PS00564">
    <property type="entry name" value="ARGININOSUCCIN_SYN_1"/>
    <property type="match status" value="1"/>
</dbReference>
<dbReference type="PROSITE" id="PS00565">
    <property type="entry name" value="ARGININOSUCCIN_SYN_2"/>
    <property type="match status" value="1"/>
</dbReference>